<dbReference type="EMBL" id="V00896">
    <property type="protein sequence ID" value="CAA24261.1"/>
    <property type="molecule type" value="mRNA"/>
</dbReference>
<dbReference type="PIR" id="A03019">
    <property type="entry name" value="TPRBCW"/>
</dbReference>
<dbReference type="PIR" id="I46512">
    <property type="entry name" value="I46512"/>
</dbReference>
<dbReference type="RefSeq" id="XP_002713286.1">
    <property type="nucleotide sequence ID" value="XM_002713240.5"/>
</dbReference>
<dbReference type="BMRB" id="P02591"/>
<dbReference type="SMR" id="P02591"/>
<dbReference type="BioGRID" id="1183415">
    <property type="interactions" value="2"/>
</dbReference>
<dbReference type="FunCoup" id="P02591">
    <property type="interactions" value="35"/>
</dbReference>
<dbReference type="STRING" id="9986.ENSOCUP00000006896"/>
<dbReference type="iPTMnet" id="P02591"/>
<dbReference type="PaxDb" id="9986-ENSOCUP00000006896"/>
<dbReference type="Ensembl" id="ENSOCUT00000007980.3">
    <property type="protein sequence ID" value="ENSOCUP00000006896.2"/>
    <property type="gene ID" value="ENSOCUG00000007983.3"/>
</dbReference>
<dbReference type="GeneID" id="100347570"/>
<dbReference type="KEGG" id="ocu:100347570"/>
<dbReference type="CTD" id="7134"/>
<dbReference type="eggNOG" id="KOG0027">
    <property type="taxonomic scope" value="Eukaryota"/>
</dbReference>
<dbReference type="GeneTree" id="ENSGT00940000153541"/>
<dbReference type="HOGENOM" id="CLU_061288_2_5_1"/>
<dbReference type="InParanoid" id="P02591"/>
<dbReference type="OMA" id="QKSEFRA"/>
<dbReference type="OrthoDB" id="26525at2759"/>
<dbReference type="TreeFam" id="TF318191"/>
<dbReference type="Proteomes" id="UP000001811">
    <property type="component" value="Chromosome 9"/>
</dbReference>
<dbReference type="Bgee" id="ENSOCUG00000007983">
    <property type="expression patterns" value="Expressed in heart and 19 other cell types or tissues"/>
</dbReference>
<dbReference type="GO" id="GO:1990584">
    <property type="term" value="C:cardiac Troponin complex"/>
    <property type="evidence" value="ECO:0007669"/>
    <property type="project" value="Ensembl"/>
</dbReference>
<dbReference type="GO" id="GO:0016460">
    <property type="term" value="C:myosin II complex"/>
    <property type="evidence" value="ECO:0007669"/>
    <property type="project" value="TreeGrafter"/>
</dbReference>
<dbReference type="GO" id="GO:0051015">
    <property type="term" value="F:actin filament binding"/>
    <property type="evidence" value="ECO:0007669"/>
    <property type="project" value="Ensembl"/>
</dbReference>
<dbReference type="GO" id="GO:0005509">
    <property type="term" value="F:calcium ion binding"/>
    <property type="evidence" value="ECO:0000250"/>
    <property type="project" value="AgBase"/>
</dbReference>
<dbReference type="GO" id="GO:0048306">
    <property type="term" value="F:calcium-dependent protein binding"/>
    <property type="evidence" value="ECO:0007669"/>
    <property type="project" value="Ensembl"/>
</dbReference>
<dbReference type="GO" id="GO:0042803">
    <property type="term" value="F:protein homodimerization activity"/>
    <property type="evidence" value="ECO:0007669"/>
    <property type="project" value="Ensembl"/>
</dbReference>
<dbReference type="GO" id="GO:0031013">
    <property type="term" value="F:troponin I binding"/>
    <property type="evidence" value="ECO:0007669"/>
    <property type="project" value="Ensembl"/>
</dbReference>
<dbReference type="GO" id="GO:0031014">
    <property type="term" value="F:troponin T binding"/>
    <property type="evidence" value="ECO:0007669"/>
    <property type="project" value="Ensembl"/>
</dbReference>
<dbReference type="GO" id="GO:0060048">
    <property type="term" value="P:cardiac muscle contraction"/>
    <property type="evidence" value="ECO:0007669"/>
    <property type="project" value="Ensembl"/>
</dbReference>
<dbReference type="GO" id="GO:0032972">
    <property type="term" value="P:regulation of muscle filament sliding speed"/>
    <property type="evidence" value="ECO:0007669"/>
    <property type="project" value="Ensembl"/>
</dbReference>
<dbReference type="GO" id="GO:0014883">
    <property type="term" value="P:transition between fast and slow fiber"/>
    <property type="evidence" value="ECO:0007669"/>
    <property type="project" value="Ensembl"/>
</dbReference>
<dbReference type="GO" id="GO:0055010">
    <property type="term" value="P:ventricular cardiac muscle tissue morphogenesis"/>
    <property type="evidence" value="ECO:0007669"/>
    <property type="project" value="Ensembl"/>
</dbReference>
<dbReference type="CDD" id="cd00051">
    <property type="entry name" value="EFh"/>
    <property type="match status" value="2"/>
</dbReference>
<dbReference type="FunFam" id="1.10.238.10:FF:000033">
    <property type="entry name" value="Troponin C, slow skeletal and cardiac muscles"/>
    <property type="match status" value="1"/>
</dbReference>
<dbReference type="Gene3D" id="1.10.238.10">
    <property type="entry name" value="EF-hand"/>
    <property type="match status" value="2"/>
</dbReference>
<dbReference type="InterPro" id="IPR050230">
    <property type="entry name" value="CALM/Myosin/TropC-like"/>
</dbReference>
<dbReference type="InterPro" id="IPR011992">
    <property type="entry name" value="EF-hand-dom_pair"/>
</dbReference>
<dbReference type="InterPro" id="IPR018247">
    <property type="entry name" value="EF_Hand_1_Ca_BS"/>
</dbReference>
<dbReference type="InterPro" id="IPR002048">
    <property type="entry name" value="EF_hand_dom"/>
</dbReference>
<dbReference type="PANTHER" id="PTHR23048">
    <property type="entry name" value="MYOSIN LIGHT CHAIN 1, 3"/>
    <property type="match status" value="1"/>
</dbReference>
<dbReference type="PANTHER" id="PTHR23048:SF47">
    <property type="entry name" value="TROPONIN C1, SLOW SKELETAL AND CARDIAC TYPE"/>
    <property type="match status" value="1"/>
</dbReference>
<dbReference type="Pfam" id="PF13499">
    <property type="entry name" value="EF-hand_7"/>
    <property type="match status" value="1"/>
</dbReference>
<dbReference type="Pfam" id="PF13833">
    <property type="entry name" value="EF-hand_8"/>
    <property type="match status" value="1"/>
</dbReference>
<dbReference type="PRINTS" id="PR00450">
    <property type="entry name" value="RECOVERIN"/>
</dbReference>
<dbReference type="SMART" id="SM00054">
    <property type="entry name" value="EFh"/>
    <property type="match status" value="4"/>
</dbReference>
<dbReference type="SUPFAM" id="SSF47473">
    <property type="entry name" value="EF-hand"/>
    <property type="match status" value="1"/>
</dbReference>
<dbReference type="PROSITE" id="PS00018">
    <property type="entry name" value="EF_HAND_1"/>
    <property type="match status" value="3"/>
</dbReference>
<dbReference type="PROSITE" id="PS50222">
    <property type="entry name" value="EF_HAND_2"/>
    <property type="match status" value="4"/>
</dbReference>
<gene>
    <name type="primary">TNNC1</name>
</gene>
<proteinExistence type="evidence at protein level"/>
<name>TNNC1_RABIT</name>
<reference key="1">
    <citation type="journal article" date="1980" name="Eur. J. Biochem.">
        <title>Troponin C from rabbit slow skeletal and cardiac muscle is the product of a single gene.</title>
        <authorList>
            <person name="Wilkinson J.M."/>
        </authorList>
    </citation>
    <scope>PROTEIN SEQUENCE</scope>
    <scope>ACETYLATION AT MET-1</scope>
</reference>
<reference key="2">
    <citation type="journal article" date="1983" name="Nature">
        <title>A new troponin T and cDNA clones for 13 different muscle proteins, found by shotgun sequencing.</title>
        <authorList>
            <person name="Putney S.D."/>
            <person name="Herlihy W.C."/>
            <person name="Schimmel P.R."/>
        </authorList>
    </citation>
    <scope>NUCLEOTIDE SEQUENCE [MRNA] OF 134-148</scope>
</reference>
<feature type="chain" id="PRO_0000073700" description="Troponin C, slow skeletal and cardiac muscles">
    <location>
        <begin position="1"/>
        <end position="161"/>
    </location>
</feature>
<feature type="domain" description="EF-hand 1" evidence="2">
    <location>
        <begin position="16"/>
        <end position="51"/>
    </location>
</feature>
<feature type="domain" description="EF-hand 2" evidence="2">
    <location>
        <begin position="52"/>
        <end position="87"/>
    </location>
</feature>
<feature type="domain" description="EF-hand 3" evidence="2">
    <location>
        <begin position="92"/>
        <end position="127"/>
    </location>
</feature>
<feature type="domain" description="EF-hand 4" evidence="2">
    <location>
        <begin position="128"/>
        <end position="161"/>
    </location>
</feature>
<feature type="binding site" evidence="2">
    <location>
        <position position="65"/>
    </location>
    <ligand>
        <name>Ca(2+)</name>
        <dbReference type="ChEBI" id="CHEBI:29108"/>
        <label>1</label>
    </ligand>
</feature>
<feature type="binding site" evidence="2">
    <location>
        <position position="67"/>
    </location>
    <ligand>
        <name>Ca(2+)</name>
        <dbReference type="ChEBI" id="CHEBI:29108"/>
        <label>1</label>
    </ligand>
</feature>
<feature type="binding site" evidence="2">
    <location>
        <position position="69"/>
    </location>
    <ligand>
        <name>Ca(2+)</name>
        <dbReference type="ChEBI" id="CHEBI:29108"/>
        <label>1</label>
    </ligand>
</feature>
<feature type="binding site" evidence="2">
    <location>
        <position position="71"/>
    </location>
    <ligand>
        <name>Ca(2+)</name>
        <dbReference type="ChEBI" id="CHEBI:29108"/>
        <label>1</label>
    </ligand>
</feature>
<feature type="binding site" evidence="2">
    <location>
        <position position="76"/>
    </location>
    <ligand>
        <name>Ca(2+)</name>
        <dbReference type="ChEBI" id="CHEBI:29108"/>
        <label>1</label>
    </ligand>
</feature>
<feature type="binding site" evidence="2">
    <location>
        <position position="105"/>
    </location>
    <ligand>
        <name>Ca(2+)</name>
        <dbReference type="ChEBI" id="CHEBI:29108"/>
        <label>2</label>
    </ligand>
</feature>
<feature type="binding site" evidence="2">
    <location>
        <position position="107"/>
    </location>
    <ligand>
        <name>Ca(2+)</name>
        <dbReference type="ChEBI" id="CHEBI:29108"/>
        <label>2</label>
    </ligand>
</feature>
<feature type="binding site" evidence="2">
    <location>
        <position position="109"/>
    </location>
    <ligand>
        <name>Ca(2+)</name>
        <dbReference type="ChEBI" id="CHEBI:29108"/>
        <label>2</label>
    </ligand>
</feature>
<feature type="binding site" evidence="2">
    <location>
        <position position="111"/>
    </location>
    <ligand>
        <name>Ca(2+)</name>
        <dbReference type="ChEBI" id="CHEBI:29108"/>
        <label>2</label>
    </ligand>
</feature>
<feature type="binding site" evidence="2">
    <location>
        <position position="116"/>
    </location>
    <ligand>
        <name>Ca(2+)</name>
        <dbReference type="ChEBI" id="CHEBI:29108"/>
        <label>2</label>
    </ligand>
</feature>
<feature type="binding site" evidence="2">
    <location>
        <position position="141"/>
    </location>
    <ligand>
        <name>Ca(2+)</name>
        <dbReference type="ChEBI" id="CHEBI:29108"/>
        <label>3</label>
    </ligand>
</feature>
<feature type="binding site" evidence="2">
    <location>
        <position position="143"/>
    </location>
    <ligand>
        <name>Ca(2+)</name>
        <dbReference type="ChEBI" id="CHEBI:29108"/>
        <label>3</label>
    </ligand>
</feature>
<feature type="binding site" evidence="2">
    <location>
        <position position="145"/>
    </location>
    <ligand>
        <name>Ca(2+)</name>
        <dbReference type="ChEBI" id="CHEBI:29108"/>
        <label>3</label>
    </ligand>
</feature>
<feature type="binding site" evidence="2">
    <location>
        <position position="147"/>
    </location>
    <ligand>
        <name>Ca(2+)</name>
        <dbReference type="ChEBI" id="CHEBI:29108"/>
        <label>3</label>
    </ligand>
</feature>
<feature type="binding site" evidence="2">
    <location>
        <position position="152"/>
    </location>
    <ligand>
        <name>Ca(2+)</name>
        <dbReference type="ChEBI" id="CHEBI:29108"/>
        <label>3</label>
    </ligand>
</feature>
<feature type="modified residue" description="N-acetylmethionine" evidence="3">
    <location>
        <position position="1"/>
    </location>
</feature>
<feature type="modified residue" description="Phosphoserine" evidence="1">
    <location>
        <position position="98"/>
    </location>
</feature>
<keyword id="KW-0007">Acetylation</keyword>
<keyword id="KW-0106">Calcium</keyword>
<keyword id="KW-0903">Direct protein sequencing</keyword>
<keyword id="KW-0479">Metal-binding</keyword>
<keyword id="KW-0514">Muscle protein</keyword>
<keyword id="KW-0597">Phosphoprotein</keyword>
<keyword id="KW-1185">Reference proteome</keyword>
<keyword id="KW-0677">Repeat</keyword>
<evidence type="ECO:0000250" key="1">
    <source>
        <dbReference type="UniProtKB" id="P19123"/>
    </source>
</evidence>
<evidence type="ECO:0000255" key="2">
    <source>
        <dbReference type="PROSITE-ProRule" id="PRU00448"/>
    </source>
</evidence>
<evidence type="ECO:0000269" key="3">
    <source>
    </source>
</evidence>
<evidence type="ECO:0000305" key="4"/>
<protein>
    <recommendedName>
        <fullName>Troponin C, slow skeletal and cardiac muscles</fullName>
        <shortName>TN-C</shortName>
    </recommendedName>
</protein>
<organism>
    <name type="scientific">Oryctolagus cuniculus</name>
    <name type="common">Rabbit</name>
    <dbReference type="NCBI Taxonomy" id="9986"/>
    <lineage>
        <taxon>Eukaryota</taxon>
        <taxon>Metazoa</taxon>
        <taxon>Chordata</taxon>
        <taxon>Craniata</taxon>
        <taxon>Vertebrata</taxon>
        <taxon>Euteleostomi</taxon>
        <taxon>Mammalia</taxon>
        <taxon>Eutheria</taxon>
        <taxon>Euarchontoglires</taxon>
        <taxon>Glires</taxon>
        <taxon>Lagomorpha</taxon>
        <taxon>Leporidae</taxon>
        <taxon>Oryctolagus</taxon>
    </lineage>
</organism>
<accession>P02591</accession>
<sequence length="161" mass="18403">MDDIYKAAVEQLTEEQKNEFKAAFDIFVLGAEDGCISTKELGKVMRMLGQNPTPEELQEMIDEVDEDGSGTVDFDEFLVMMVRCMKDDSKGKSEEELSDLFRMFDKNADGYIDLDELKIMLQATGETITEDDIEELMKDGDKNNDGRIDYDEFLEFMKGVE</sequence>
<comment type="function">
    <text>Troponin is the central regulatory protein of striated muscle contraction. Tn consists of three components: Tn-I which is the inhibitor of actomyosin ATPase, Tn-T which contains the binding site for tropomyosin and Tn-C. The binding of calcium to Tn-C abolishes the inhibitory action of Tn on actin filaments.</text>
</comment>
<comment type="miscellaneous">
    <text>Cardiac muscle Tn-C can bind 3 calcium ions per molecule. Domain I does not bind calcium.</text>
</comment>
<comment type="similarity">
    <text evidence="4">Belongs to the troponin C family.</text>
</comment>